<accession>P23924</accession>
<protein>
    <recommendedName>
        <fullName evidence="1">Galactose/methyl galactoside import ATP-binding protein MglA</fullName>
        <ecNumber evidence="1 5">7.5.2.11</ecNumber>
    </recommendedName>
</protein>
<reference key="1">
    <citation type="journal article" date="1996" name="Gene">
        <title>Sequences of the Salmonella typhimurium mglA and mglC genes.</title>
        <authorList>
            <person name="Stamm L.V."/>
            <person name="Young N.R."/>
            <person name="Frye J.G."/>
        </authorList>
    </citation>
    <scope>NUCLEOTIDE SEQUENCE [GENOMIC DNA]</scope>
    <source>
        <strain>LT2</strain>
    </source>
</reference>
<reference key="2">
    <citation type="journal article" date="2001" name="Nature">
        <title>Complete genome sequence of Salmonella enterica serovar Typhimurium LT2.</title>
        <authorList>
            <person name="McClelland M."/>
            <person name="Sanderson K.E."/>
            <person name="Spieth J."/>
            <person name="Clifton S.W."/>
            <person name="Latreille P."/>
            <person name="Courtney L."/>
            <person name="Porwollik S."/>
            <person name="Ali J."/>
            <person name="Dante M."/>
            <person name="Du F."/>
            <person name="Hou S."/>
            <person name="Layman D."/>
            <person name="Leonard S."/>
            <person name="Nguyen C."/>
            <person name="Scott K."/>
            <person name="Holmes A."/>
            <person name="Grewal N."/>
            <person name="Mulvaney E."/>
            <person name="Ryan E."/>
            <person name="Sun H."/>
            <person name="Florea L."/>
            <person name="Miller W."/>
            <person name="Stoneking T."/>
            <person name="Nhan M."/>
            <person name="Waterston R."/>
            <person name="Wilson R.K."/>
        </authorList>
    </citation>
    <scope>NUCLEOTIDE SEQUENCE [LARGE SCALE GENOMIC DNA]</scope>
    <source>
        <strain>LT2 / SGSC1412 / ATCC 700720</strain>
    </source>
</reference>
<reference key="3">
    <citation type="journal article" date="1988" name="Mol. Gen. Genet.">
        <title>The mglB sequence of Salmonella typhimurium LT2; promoter analysis by gene fusions and evidence for a divergently oriented gene coding for the mgl repressor.</title>
        <authorList>
            <person name="Benner-Luger D."/>
            <person name="Boos W."/>
        </authorList>
    </citation>
    <scope>NUCLEOTIDE SEQUENCE [GENOMIC DNA] OF 1-42</scope>
    <source>
        <strain>LT2</strain>
    </source>
</reference>
<reference key="4">
    <citation type="journal article" date="1985" name="J. Bacteriol.">
        <title>Characterization of the Salmonella typhimurium mgl operon and its gene products.</title>
        <authorList>
            <person name="Mueller N."/>
            <person name="Heine H.-G."/>
            <person name="Boos W."/>
        </authorList>
    </citation>
    <scope>SUBCELLULAR LOCATION</scope>
    <scope>FUNCTION IN GALACTOSE TRANSPORT</scope>
</reference>
<reference key="5">
    <citation type="journal article" date="1993" name="J. Biol. Chem.">
        <title>The MglA component of the binding protein-dependent galactose transport system of Salmonella typhimurium is a galactose-stimulated ATPase.</title>
        <authorList>
            <person name="Richarme G."/>
            <person name="El Yaagoubi A."/>
            <person name="Kohiyama M."/>
        </authorList>
    </citation>
    <scope>FUNCTION IN GALACTOSE TRANSPORT</scope>
    <scope>ATPASE ACTIVITY</scope>
    <scope>ACTIVITY REGULATION</scope>
    <scope>BIOPHYSICOCHEMICAL PROPERTIES</scope>
</reference>
<comment type="function">
    <text evidence="1 4 5">Part of the ABC transporter complex MglABC involved in galactose/methyl galactoside import. Responsible for energy coupling to the transport system.</text>
</comment>
<comment type="catalytic activity">
    <reaction evidence="1 5">
        <text>D-galactose(out) + ATP + H2O = D-galactose(in) + ADP + phosphate + H(+)</text>
        <dbReference type="Rhea" id="RHEA:60156"/>
        <dbReference type="ChEBI" id="CHEBI:4139"/>
        <dbReference type="ChEBI" id="CHEBI:15377"/>
        <dbReference type="ChEBI" id="CHEBI:15378"/>
        <dbReference type="ChEBI" id="CHEBI:30616"/>
        <dbReference type="ChEBI" id="CHEBI:43474"/>
        <dbReference type="ChEBI" id="CHEBI:456216"/>
        <dbReference type="EC" id="7.5.2.11"/>
    </reaction>
    <physiologicalReaction direction="left-to-right" evidence="1">
        <dbReference type="Rhea" id="RHEA:60157"/>
    </physiologicalReaction>
</comment>
<comment type="catalytic activity">
    <reaction evidence="1">
        <text>methyl beta-D-galactoside(out) + ATP + H2O = methyl beta-D-galactoside(in) + ADP + phosphate + H(+)</text>
        <dbReference type="Rhea" id="RHEA:72531"/>
        <dbReference type="ChEBI" id="CHEBI:15377"/>
        <dbReference type="ChEBI" id="CHEBI:15378"/>
        <dbReference type="ChEBI" id="CHEBI:17540"/>
        <dbReference type="ChEBI" id="CHEBI:30616"/>
        <dbReference type="ChEBI" id="CHEBI:43474"/>
        <dbReference type="ChEBI" id="CHEBI:456216"/>
    </reaction>
    <physiologicalReaction direction="left-to-right" evidence="1">
        <dbReference type="Rhea" id="RHEA:72532"/>
    </physiologicalReaction>
</comment>
<comment type="activity regulation">
    <text evidence="3">Stimulated 3-fold by galactose and inhibited by vanadate, N-ethylmaleimide, and 5-methoxyindole-2-carboxylic acid.</text>
</comment>
<comment type="biophysicochemical properties">
    <kinetics>
        <KM evidence="3">60 uM for ATP</KM>
        <Vmax evidence="3">140.0 nmol/min/mg enzyme</Vmax>
    </kinetics>
    <phDependence>
        <text evidence="3">Optimum pH is about 8.</text>
    </phDependence>
</comment>
<comment type="subunit">
    <text evidence="1">The complex is composed of one ATP-binding protein (MglA), two transmembrane proteins (MglC) and a solute-binding protein (MglB).</text>
</comment>
<comment type="subcellular location">
    <subcellularLocation>
        <location evidence="1 2">Cell inner membrane</location>
        <topology evidence="1 4">Peripheral membrane protein</topology>
    </subcellularLocation>
</comment>
<comment type="similarity">
    <text evidence="1">Belongs to the ABC transporter superfamily. Galactose/methyl galactoside importer (TC 3.A.1.2.3) family.</text>
</comment>
<dbReference type="EC" id="7.5.2.11" evidence="1 5"/>
<dbReference type="EMBL" id="U40492">
    <property type="protein sequence ID" value="AAC44149.1"/>
    <property type="molecule type" value="Genomic_DNA"/>
</dbReference>
<dbReference type="EMBL" id="AE006468">
    <property type="protein sequence ID" value="AAL21093.1"/>
    <property type="molecule type" value="Genomic_DNA"/>
</dbReference>
<dbReference type="PIR" id="S29391">
    <property type="entry name" value="S29391"/>
</dbReference>
<dbReference type="RefSeq" id="NP_461134.1">
    <property type="nucleotide sequence ID" value="NC_003197.2"/>
</dbReference>
<dbReference type="RefSeq" id="WP_000535907.1">
    <property type="nucleotide sequence ID" value="NC_003197.2"/>
</dbReference>
<dbReference type="SMR" id="P23924"/>
<dbReference type="STRING" id="99287.STM2189"/>
<dbReference type="PaxDb" id="99287-STM2189"/>
<dbReference type="GeneID" id="1253711"/>
<dbReference type="KEGG" id="stm:STM2189"/>
<dbReference type="PATRIC" id="fig|99287.12.peg.2316"/>
<dbReference type="HOGENOM" id="CLU_000604_92_3_6"/>
<dbReference type="OMA" id="WIFAGPD"/>
<dbReference type="PhylomeDB" id="P23924"/>
<dbReference type="BioCyc" id="SENT99287:STM2189-MONOMER"/>
<dbReference type="Proteomes" id="UP000001014">
    <property type="component" value="Chromosome"/>
</dbReference>
<dbReference type="GO" id="GO:0005886">
    <property type="term" value="C:plasma membrane"/>
    <property type="evidence" value="ECO:0007669"/>
    <property type="project" value="UniProtKB-SubCell"/>
</dbReference>
<dbReference type="GO" id="GO:0005524">
    <property type="term" value="F:ATP binding"/>
    <property type="evidence" value="ECO:0007669"/>
    <property type="project" value="UniProtKB-KW"/>
</dbReference>
<dbReference type="GO" id="GO:0016887">
    <property type="term" value="F:ATP hydrolysis activity"/>
    <property type="evidence" value="ECO:0007669"/>
    <property type="project" value="InterPro"/>
</dbReference>
<dbReference type="CDD" id="cd03216">
    <property type="entry name" value="ABC_Carb_Monos_I"/>
    <property type="match status" value="1"/>
</dbReference>
<dbReference type="CDD" id="cd03215">
    <property type="entry name" value="ABC_Carb_Monos_II"/>
    <property type="match status" value="1"/>
</dbReference>
<dbReference type="FunFam" id="3.40.50.300:FF:000126">
    <property type="entry name" value="Galactose/methyl galactoside import ATP-binding protein MglA"/>
    <property type="match status" value="1"/>
</dbReference>
<dbReference type="FunFam" id="3.40.50.300:FF:000127">
    <property type="entry name" value="Ribose import ATP-binding protein RbsA"/>
    <property type="match status" value="1"/>
</dbReference>
<dbReference type="Gene3D" id="3.40.50.300">
    <property type="entry name" value="P-loop containing nucleotide triphosphate hydrolases"/>
    <property type="match status" value="2"/>
</dbReference>
<dbReference type="InterPro" id="IPR003593">
    <property type="entry name" value="AAA+_ATPase"/>
</dbReference>
<dbReference type="InterPro" id="IPR050107">
    <property type="entry name" value="ABC_carbohydrate_import_ATPase"/>
</dbReference>
<dbReference type="InterPro" id="IPR003439">
    <property type="entry name" value="ABC_transporter-like_ATP-bd"/>
</dbReference>
<dbReference type="InterPro" id="IPR017871">
    <property type="entry name" value="ABC_transporter-like_CS"/>
</dbReference>
<dbReference type="InterPro" id="IPR027417">
    <property type="entry name" value="P-loop_NTPase"/>
</dbReference>
<dbReference type="NCBIfam" id="NF008215">
    <property type="entry name" value="PRK10982.1"/>
    <property type="match status" value="1"/>
</dbReference>
<dbReference type="PANTHER" id="PTHR43790">
    <property type="entry name" value="CARBOHYDRATE TRANSPORT ATP-BINDING PROTEIN MG119-RELATED"/>
    <property type="match status" value="1"/>
</dbReference>
<dbReference type="PANTHER" id="PTHR43790:SF7">
    <property type="entry name" value="GALACTOSE_METHYL GALACTOSIDE IMPORT ATP-BINDING PROTEIN MGLA"/>
    <property type="match status" value="1"/>
</dbReference>
<dbReference type="Pfam" id="PF00005">
    <property type="entry name" value="ABC_tran"/>
    <property type="match status" value="2"/>
</dbReference>
<dbReference type="SMART" id="SM00382">
    <property type="entry name" value="AAA"/>
    <property type="match status" value="2"/>
</dbReference>
<dbReference type="SUPFAM" id="SSF52540">
    <property type="entry name" value="P-loop containing nucleoside triphosphate hydrolases"/>
    <property type="match status" value="2"/>
</dbReference>
<dbReference type="PROSITE" id="PS00211">
    <property type="entry name" value="ABC_TRANSPORTER_1"/>
    <property type="match status" value="1"/>
</dbReference>
<dbReference type="PROSITE" id="PS50893">
    <property type="entry name" value="ABC_TRANSPORTER_2"/>
    <property type="match status" value="2"/>
</dbReference>
<dbReference type="PROSITE" id="PS51260">
    <property type="entry name" value="MGLA"/>
    <property type="match status" value="1"/>
</dbReference>
<feature type="chain" id="PRO_0000092513" description="Galactose/methyl galactoside import ATP-binding protein MglA">
    <location>
        <begin position="1"/>
        <end position="506"/>
    </location>
</feature>
<feature type="domain" description="ABC transporter 1" evidence="1">
    <location>
        <begin position="14"/>
        <end position="249"/>
    </location>
</feature>
<feature type="domain" description="ABC transporter 2" evidence="1">
    <location>
        <begin position="259"/>
        <end position="506"/>
    </location>
</feature>
<feature type="binding site" evidence="1">
    <location>
        <begin position="46"/>
        <end position="53"/>
    </location>
    <ligand>
        <name>ATP</name>
        <dbReference type="ChEBI" id="CHEBI:30616"/>
    </ligand>
</feature>
<gene>
    <name evidence="1" type="primary">mglA</name>
    <name type="ordered locus">STM2189</name>
</gene>
<name>MGLA_SALTY</name>
<keyword id="KW-0067">ATP-binding</keyword>
<keyword id="KW-0997">Cell inner membrane</keyword>
<keyword id="KW-1003">Cell membrane</keyword>
<keyword id="KW-0472">Membrane</keyword>
<keyword id="KW-0547">Nucleotide-binding</keyword>
<keyword id="KW-1185">Reference proteome</keyword>
<keyword id="KW-0677">Repeat</keyword>
<keyword id="KW-0762">Sugar transport</keyword>
<keyword id="KW-1278">Translocase</keyword>
<keyword id="KW-0813">Transport</keyword>
<sequence length="506" mass="56477">MGSTISPPSGEYLLEMRGINKSFPGVKALDNVNLNVRPHSIHALMGENGAGKSTLLKCLFGIYQKDSGSIVFQGKEVDFHSAKEALENGISMVHQELNLVLQRSVMDNMWLGRYPTKGMFVDQDKMYQDTKAIFDELDIDIDPRARVGTLSVSQMQMIEIAKAFSYNAKIVIMDEPTSSLTEKEVNHLFTIIRKLKERGCGIVYISHKMEEIFQLCDEITILRDGQWIATQPLEGLDMDKIIAMMVGRSLNQRFPDKENKPGDVILEVRHLTSLRQPSIRDVSFDLHKGEILGIAGLVGAKRTDIVETLFGIREKSSGTITLHGKKINNHTANEAINHGFALVTEERRSTGIYAYLDIGFNSLISNIRNYKNKVGLLDNSRMKSDTQWVIDSMRVKTPGHRTQIGSLSGGNQQKVIIGRWLLTQPEILMLDEPTRGIDVGAKFEIYQLIAELAKKGKGIIIISSEMPELLGITDRILVMSNGLVSGIVDTKTTTQNEILRLASLHL</sequence>
<organism>
    <name type="scientific">Salmonella typhimurium (strain LT2 / SGSC1412 / ATCC 700720)</name>
    <dbReference type="NCBI Taxonomy" id="99287"/>
    <lineage>
        <taxon>Bacteria</taxon>
        <taxon>Pseudomonadati</taxon>
        <taxon>Pseudomonadota</taxon>
        <taxon>Gammaproteobacteria</taxon>
        <taxon>Enterobacterales</taxon>
        <taxon>Enterobacteriaceae</taxon>
        <taxon>Salmonella</taxon>
    </lineage>
</organism>
<proteinExistence type="evidence at protein level"/>
<evidence type="ECO:0000255" key="1">
    <source>
        <dbReference type="HAMAP-Rule" id="MF_01717"/>
    </source>
</evidence>
<evidence type="ECO:0000269" key="2">
    <source>
    </source>
</evidence>
<evidence type="ECO:0000269" key="3">
    <source>
    </source>
</evidence>
<evidence type="ECO:0000305" key="4">
    <source>
    </source>
</evidence>
<evidence type="ECO:0000305" key="5">
    <source>
    </source>
</evidence>